<accession>O75665</accession>
<accession>B9ZVU5</accession>
<accession>O75666</accession>
<accession>Q4VAK4</accession>
<dbReference type="EMBL" id="Y15164">
    <property type="protein sequence ID" value="CAA75436.1"/>
    <property type="molecule type" value="mRNA"/>
</dbReference>
<dbReference type="EMBL" id="Y16355">
    <property type="protein sequence ID" value="CAA76185.1"/>
    <property type="molecule type" value="mRNA"/>
</dbReference>
<dbReference type="EMBL" id="AC003037">
    <property type="status" value="NOT_ANNOTATED_CDS"/>
    <property type="molecule type" value="Genomic_DNA"/>
</dbReference>
<dbReference type="EMBL" id="BC096344">
    <property type="protein sequence ID" value="AAH96344.1"/>
    <property type="molecule type" value="mRNA"/>
</dbReference>
<dbReference type="CCDS" id="CCDS14157.1">
    <molecule id="O75665-1"/>
</dbReference>
<dbReference type="CCDS" id="CCDS83454.1">
    <molecule id="O75665-3"/>
</dbReference>
<dbReference type="RefSeq" id="NP_001317138.1">
    <molecule id="O75665-3"/>
    <property type="nucleotide sequence ID" value="NM_001330209.2"/>
</dbReference>
<dbReference type="RefSeq" id="NP_003602.1">
    <molecule id="O75665-1"/>
    <property type="nucleotide sequence ID" value="NM_003611.3"/>
</dbReference>
<dbReference type="SMR" id="O75665"/>
<dbReference type="BioGRID" id="114055">
    <property type="interactions" value="373"/>
</dbReference>
<dbReference type="CORUM" id="O75665"/>
<dbReference type="DIP" id="DIP-60601N"/>
<dbReference type="FunCoup" id="O75665">
    <property type="interactions" value="1054"/>
</dbReference>
<dbReference type="IntAct" id="O75665">
    <property type="interactions" value="321"/>
</dbReference>
<dbReference type="MINT" id="O75665"/>
<dbReference type="STRING" id="9606.ENSP00000344314"/>
<dbReference type="GlyGen" id="O75665">
    <property type="glycosylation" value="1 site, 1 O-linked glycan (1 site)"/>
</dbReference>
<dbReference type="iPTMnet" id="O75665"/>
<dbReference type="PhosphoSitePlus" id="O75665"/>
<dbReference type="SwissPalm" id="O75665"/>
<dbReference type="BioMuta" id="OFD1"/>
<dbReference type="jPOST" id="O75665"/>
<dbReference type="MassIVE" id="O75665"/>
<dbReference type="PaxDb" id="9606-ENSP00000344314"/>
<dbReference type="PeptideAtlas" id="O75665"/>
<dbReference type="ProteomicsDB" id="50145">
    <molecule id="O75665-1"/>
</dbReference>
<dbReference type="ProteomicsDB" id="50146">
    <molecule id="O75665-2"/>
</dbReference>
<dbReference type="ProteomicsDB" id="50147">
    <molecule id="O75665-3"/>
</dbReference>
<dbReference type="Pumba" id="O75665"/>
<dbReference type="Antibodypedia" id="23854">
    <property type="antibodies" value="90 antibodies from 25 providers"/>
</dbReference>
<dbReference type="DNASU" id="8481"/>
<dbReference type="Ensembl" id="ENST00000340096.11">
    <molecule id="O75665-1"/>
    <property type="protein sequence ID" value="ENSP00000344314.6"/>
    <property type="gene ID" value="ENSG00000046651.16"/>
</dbReference>
<dbReference type="Ensembl" id="ENST00000380550.6">
    <molecule id="O75665-3"/>
    <property type="protein sequence ID" value="ENSP00000369923.3"/>
    <property type="gene ID" value="ENSG00000046651.16"/>
</dbReference>
<dbReference type="Ensembl" id="ENST00000682237.1">
    <molecule id="O75665-2"/>
    <property type="protein sequence ID" value="ENSP00000507121.1"/>
    <property type="gene ID" value="ENSG00000046651.16"/>
</dbReference>
<dbReference type="GeneID" id="8481"/>
<dbReference type="KEGG" id="hsa:8481"/>
<dbReference type="MANE-Select" id="ENST00000340096.11">
    <property type="protein sequence ID" value="ENSP00000344314.6"/>
    <property type="RefSeq nucleotide sequence ID" value="NM_003611.3"/>
    <property type="RefSeq protein sequence ID" value="NP_003602.1"/>
</dbReference>
<dbReference type="UCSC" id="uc004cvp.5">
    <molecule id="O75665-1"/>
    <property type="organism name" value="human"/>
</dbReference>
<dbReference type="AGR" id="HGNC:2567"/>
<dbReference type="CTD" id="8481"/>
<dbReference type="DisGeNET" id="8481"/>
<dbReference type="GeneCards" id="OFD1"/>
<dbReference type="GeneReviews" id="OFD1"/>
<dbReference type="HGNC" id="HGNC:2567">
    <property type="gene designation" value="OFD1"/>
</dbReference>
<dbReference type="HPA" id="ENSG00000046651">
    <property type="expression patterns" value="Low tissue specificity"/>
</dbReference>
<dbReference type="MalaCards" id="OFD1"/>
<dbReference type="MIM" id="300170">
    <property type="type" value="gene"/>
</dbReference>
<dbReference type="MIM" id="300209">
    <property type="type" value="phenotype"/>
</dbReference>
<dbReference type="MIM" id="300424">
    <property type="type" value="phenotype"/>
</dbReference>
<dbReference type="MIM" id="300804">
    <property type="type" value="phenotype"/>
</dbReference>
<dbReference type="MIM" id="311200">
    <property type="type" value="phenotype"/>
</dbReference>
<dbReference type="neXtProt" id="NX_O75665"/>
<dbReference type="OpenTargets" id="ENSG00000046651"/>
<dbReference type="Orphanet" id="475">
    <property type="disease" value="Joubert syndrome"/>
</dbReference>
<dbReference type="Orphanet" id="2750">
    <property type="disease" value="Orofaciodigital syndrome type 1"/>
</dbReference>
<dbReference type="Orphanet" id="2754">
    <property type="disease" value="Orofaciodigital syndrome type 6"/>
</dbReference>
<dbReference type="Orphanet" id="244">
    <property type="disease" value="Primary ciliary dyskinesia"/>
</dbReference>
<dbReference type="Orphanet" id="791">
    <property type="disease" value="Retinitis pigmentosa"/>
</dbReference>
<dbReference type="PharmGKB" id="PA31909"/>
<dbReference type="VEuPathDB" id="HostDB:ENSG00000046651"/>
<dbReference type="eggNOG" id="ENOG502QQR5">
    <property type="taxonomic scope" value="Eukaryota"/>
</dbReference>
<dbReference type="GeneTree" id="ENSGT00390000001798"/>
<dbReference type="HOGENOM" id="CLU_011871_0_0_1"/>
<dbReference type="InParanoid" id="O75665"/>
<dbReference type="OMA" id="SHNYSTH"/>
<dbReference type="OrthoDB" id="206339at2759"/>
<dbReference type="PAN-GO" id="O75665">
    <property type="GO annotations" value="4 GO annotations based on evolutionary models"/>
</dbReference>
<dbReference type="PhylomeDB" id="O75665"/>
<dbReference type="TreeFam" id="TF331230"/>
<dbReference type="PathwayCommons" id="O75665"/>
<dbReference type="Reactome" id="R-HSA-2565942">
    <property type="pathway name" value="Regulation of PLK1 Activity at G2/M Transition"/>
</dbReference>
<dbReference type="Reactome" id="R-HSA-380259">
    <property type="pathway name" value="Loss of Nlp from mitotic centrosomes"/>
</dbReference>
<dbReference type="Reactome" id="R-HSA-380270">
    <property type="pathway name" value="Recruitment of mitotic centrosome proteins and complexes"/>
</dbReference>
<dbReference type="Reactome" id="R-HSA-380284">
    <property type="pathway name" value="Loss of proteins required for interphase microtubule organization from the centrosome"/>
</dbReference>
<dbReference type="Reactome" id="R-HSA-380320">
    <property type="pathway name" value="Recruitment of NuMA to mitotic centrosomes"/>
</dbReference>
<dbReference type="Reactome" id="R-HSA-5610787">
    <property type="pathway name" value="Hedgehog 'off' state"/>
</dbReference>
<dbReference type="Reactome" id="R-HSA-5620912">
    <property type="pathway name" value="Anchoring of the basal body to the plasma membrane"/>
</dbReference>
<dbReference type="Reactome" id="R-HSA-8854518">
    <property type="pathway name" value="AURKA Activation by TPX2"/>
</dbReference>
<dbReference type="SignaLink" id="O75665"/>
<dbReference type="SIGNOR" id="O75665"/>
<dbReference type="BioGRID-ORCS" id="8481">
    <property type="hits" value="17 hits in 785 CRISPR screens"/>
</dbReference>
<dbReference type="CD-CODE" id="8C2F96ED">
    <property type="entry name" value="Centrosome"/>
</dbReference>
<dbReference type="ChiTaRS" id="OFD1">
    <property type="organism name" value="human"/>
</dbReference>
<dbReference type="GeneWiki" id="OFD1"/>
<dbReference type="GenomeRNAi" id="8481"/>
<dbReference type="Pharos" id="O75665">
    <property type="development level" value="Tbio"/>
</dbReference>
<dbReference type="PRO" id="PR:O75665"/>
<dbReference type="Proteomes" id="UP000005640">
    <property type="component" value="Chromosome X"/>
</dbReference>
<dbReference type="RNAct" id="O75665">
    <property type="molecule type" value="protein"/>
</dbReference>
<dbReference type="Bgee" id="ENSG00000046651">
    <property type="expression patterns" value="Expressed in sperm and 200 other cell types or tissues"/>
</dbReference>
<dbReference type="ExpressionAtlas" id="O75665">
    <property type="expression patterns" value="baseline and differential"/>
</dbReference>
<dbReference type="GO" id="GO:0034451">
    <property type="term" value="C:centriolar satellite"/>
    <property type="evidence" value="ECO:0000250"/>
    <property type="project" value="UniProtKB"/>
</dbReference>
<dbReference type="GO" id="GO:0005814">
    <property type="term" value="C:centriole"/>
    <property type="evidence" value="ECO:0000314"/>
    <property type="project" value="UniProtKB"/>
</dbReference>
<dbReference type="GO" id="GO:0005813">
    <property type="term" value="C:centrosome"/>
    <property type="evidence" value="ECO:0000314"/>
    <property type="project" value="UniProtKB"/>
</dbReference>
<dbReference type="GO" id="GO:0036064">
    <property type="term" value="C:ciliary basal body"/>
    <property type="evidence" value="ECO:0000314"/>
    <property type="project" value="UniProtKB"/>
</dbReference>
<dbReference type="GO" id="GO:0005929">
    <property type="term" value="C:cilium"/>
    <property type="evidence" value="ECO:0000314"/>
    <property type="project" value="UniProtKB"/>
</dbReference>
<dbReference type="GO" id="GO:0005829">
    <property type="term" value="C:cytosol"/>
    <property type="evidence" value="ECO:0000304"/>
    <property type="project" value="Reactome"/>
</dbReference>
<dbReference type="GO" id="GO:0005576">
    <property type="term" value="C:extracellular region"/>
    <property type="evidence" value="ECO:0007669"/>
    <property type="project" value="GOC"/>
</dbReference>
<dbReference type="GO" id="GO:0016020">
    <property type="term" value="C:membrane"/>
    <property type="evidence" value="ECO:0007005"/>
    <property type="project" value="UniProtKB"/>
</dbReference>
<dbReference type="GO" id="GO:0031514">
    <property type="term" value="C:motile cilium"/>
    <property type="evidence" value="ECO:0000318"/>
    <property type="project" value="GO_Central"/>
</dbReference>
<dbReference type="GO" id="GO:0005634">
    <property type="term" value="C:nucleus"/>
    <property type="evidence" value="ECO:0007669"/>
    <property type="project" value="UniProtKB-SubCell"/>
</dbReference>
<dbReference type="GO" id="GO:0043014">
    <property type="term" value="F:alpha-tubulin binding"/>
    <property type="evidence" value="ECO:0000250"/>
    <property type="project" value="UniProtKB"/>
</dbReference>
<dbReference type="GO" id="GO:0043015">
    <property type="term" value="F:gamma-tubulin binding"/>
    <property type="evidence" value="ECO:0000250"/>
    <property type="project" value="UniProtKB"/>
</dbReference>
<dbReference type="GO" id="GO:0042802">
    <property type="term" value="F:identical protein binding"/>
    <property type="evidence" value="ECO:0000353"/>
    <property type="project" value="IntAct"/>
</dbReference>
<dbReference type="GO" id="GO:0060090">
    <property type="term" value="F:molecular adaptor activity"/>
    <property type="evidence" value="ECO:0000315"/>
    <property type="project" value="UniProt"/>
</dbReference>
<dbReference type="GO" id="GO:0035082">
    <property type="term" value="P:axoneme assembly"/>
    <property type="evidence" value="ECO:0007669"/>
    <property type="project" value="Ensembl"/>
</dbReference>
<dbReference type="GO" id="GO:0060271">
    <property type="term" value="P:cilium assembly"/>
    <property type="evidence" value="ECO:0000315"/>
    <property type="project" value="UniProt"/>
</dbReference>
<dbReference type="GO" id="GO:0010172">
    <property type="term" value="P:embryonic body morphogenesis"/>
    <property type="evidence" value="ECO:0007669"/>
    <property type="project" value="Ensembl"/>
</dbReference>
<dbReference type="GO" id="GO:0060287">
    <property type="term" value="P:epithelial cilium movement involved in determination of left/right asymmetry"/>
    <property type="evidence" value="ECO:0000250"/>
    <property type="project" value="UniProtKB"/>
</dbReference>
<dbReference type="GO" id="GO:2000314">
    <property type="term" value="P:negative regulation of fibroblast growth factor receptor signaling pathway involved in neural plate anterior/posterior pattern formation"/>
    <property type="evidence" value="ECO:0007669"/>
    <property type="project" value="Ensembl"/>
</dbReference>
<dbReference type="InterPro" id="IPR006594">
    <property type="entry name" value="LisH"/>
</dbReference>
<dbReference type="InterPro" id="IPR055289">
    <property type="entry name" value="OFD1"/>
</dbReference>
<dbReference type="PANTHER" id="PTHR39063:SF1">
    <property type="entry name" value="OFD1 CENTRIOLE AND CENTRIOLAR SATELLITE PROTEIN"/>
    <property type="match status" value="1"/>
</dbReference>
<dbReference type="PANTHER" id="PTHR39063">
    <property type="entry name" value="ORAL-FACIAL-DIGITAL SYNDROME 1 PROTEIN HOMOLOG"/>
    <property type="match status" value="1"/>
</dbReference>
<dbReference type="Pfam" id="PF16045">
    <property type="entry name" value="LisH_2"/>
    <property type="match status" value="1"/>
</dbReference>
<dbReference type="SMART" id="SM00667">
    <property type="entry name" value="LisH"/>
    <property type="match status" value="1"/>
</dbReference>
<dbReference type="PROSITE" id="PS50896">
    <property type="entry name" value="LISH"/>
    <property type="match status" value="1"/>
</dbReference>
<reference key="1">
    <citation type="journal article" date="1998" name="Genomics">
        <title>Characterization of Cxorf5 (71-7A), a novel human cDNA mapping to Xp22 and encoding a protein containing coiled-coil alpha-helical domains.</title>
        <authorList>
            <person name="de Conciliis L."/>
            <person name="Marchitiello A."/>
            <person name="Wapenaar M.C."/>
            <person name="Borsani G."/>
            <person name="Giglio S."/>
            <person name="Mariani M."/>
            <person name="Consalez G.G."/>
            <person name="Zuffardi O."/>
            <person name="Franco B."/>
            <person name="Ballabio A."/>
            <person name="Banfi S."/>
        </authorList>
    </citation>
    <scope>NUCLEOTIDE SEQUENCE [MRNA] (ISOFORMS 1 AND 2)</scope>
</reference>
<reference key="2">
    <citation type="journal article" date="2005" name="Nature">
        <title>The DNA sequence of the human X chromosome.</title>
        <authorList>
            <person name="Ross M.T."/>
            <person name="Grafham D.V."/>
            <person name="Coffey A.J."/>
            <person name="Scherer S."/>
            <person name="McLay K."/>
            <person name="Muzny D."/>
            <person name="Platzer M."/>
            <person name="Howell G.R."/>
            <person name="Burrows C."/>
            <person name="Bird C.P."/>
            <person name="Frankish A."/>
            <person name="Lovell F.L."/>
            <person name="Howe K.L."/>
            <person name="Ashurst J.L."/>
            <person name="Fulton R.S."/>
            <person name="Sudbrak R."/>
            <person name="Wen G."/>
            <person name="Jones M.C."/>
            <person name="Hurles M.E."/>
            <person name="Andrews T.D."/>
            <person name="Scott C.E."/>
            <person name="Searle S."/>
            <person name="Ramser J."/>
            <person name="Whittaker A."/>
            <person name="Deadman R."/>
            <person name="Carter N.P."/>
            <person name="Hunt S.E."/>
            <person name="Chen R."/>
            <person name="Cree A."/>
            <person name="Gunaratne P."/>
            <person name="Havlak P."/>
            <person name="Hodgson A."/>
            <person name="Metzker M.L."/>
            <person name="Richards S."/>
            <person name="Scott G."/>
            <person name="Steffen D."/>
            <person name="Sodergren E."/>
            <person name="Wheeler D.A."/>
            <person name="Worley K.C."/>
            <person name="Ainscough R."/>
            <person name="Ambrose K.D."/>
            <person name="Ansari-Lari M.A."/>
            <person name="Aradhya S."/>
            <person name="Ashwell R.I."/>
            <person name="Babbage A.K."/>
            <person name="Bagguley C.L."/>
            <person name="Ballabio A."/>
            <person name="Banerjee R."/>
            <person name="Barker G.E."/>
            <person name="Barlow K.F."/>
            <person name="Barrett I.P."/>
            <person name="Bates K.N."/>
            <person name="Beare D.M."/>
            <person name="Beasley H."/>
            <person name="Beasley O."/>
            <person name="Beck A."/>
            <person name="Bethel G."/>
            <person name="Blechschmidt K."/>
            <person name="Brady N."/>
            <person name="Bray-Allen S."/>
            <person name="Bridgeman A.M."/>
            <person name="Brown A.J."/>
            <person name="Brown M.J."/>
            <person name="Bonnin D."/>
            <person name="Bruford E.A."/>
            <person name="Buhay C."/>
            <person name="Burch P."/>
            <person name="Burford D."/>
            <person name="Burgess J."/>
            <person name="Burrill W."/>
            <person name="Burton J."/>
            <person name="Bye J.M."/>
            <person name="Carder C."/>
            <person name="Carrel L."/>
            <person name="Chako J."/>
            <person name="Chapman J.C."/>
            <person name="Chavez D."/>
            <person name="Chen E."/>
            <person name="Chen G."/>
            <person name="Chen Y."/>
            <person name="Chen Z."/>
            <person name="Chinault C."/>
            <person name="Ciccodicola A."/>
            <person name="Clark S.Y."/>
            <person name="Clarke G."/>
            <person name="Clee C.M."/>
            <person name="Clegg S."/>
            <person name="Clerc-Blankenburg K."/>
            <person name="Clifford K."/>
            <person name="Cobley V."/>
            <person name="Cole C.G."/>
            <person name="Conquer J.S."/>
            <person name="Corby N."/>
            <person name="Connor R.E."/>
            <person name="David R."/>
            <person name="Davies J."/>
            <person name="Davis C."/>
            <person name="Davis J."/>
            <person name="Delgado O."/>
            <person name="Deshazo D."/>
            <person name="Dhami P."/>
            <person name="Ding Y."/>
            <person name="Dinh H."/>
            <person name="Dodsworth S."/>
            <person name="Draper H."/>
            <person name="Dugan-Rocha S."/>
            <person name="Dunham A."/>
            <person name="Dunn M."/>
            <person name="Durbin K.J."/>
            <person name="Dutta I."/>
            <person name="Eades T."/>
            <person name="Ellwood M."/>
            <person name="Emery-Cohen A."/>
            <person name="Errington H."/>
            <person name="Evans K.L."/>
            <person name="Faulkner L."/>
            <person name="Francis F."/>
            <person name="Frankland J."/>
            <person name="Fraser A.E."/>
            <person name="Galgoczy P."/>
            <person name="Gilbert J."/>
            <person name="Gill R."/>
            <person name="Gloeckner G."/>
            <person name="Gregory S.G."/>
            <person name="Gribble S."/>
            <person name="Griffiths C."/>
            <person name="Grocock R."/>
            <person name="Gu Y."/>
            <person name="Gwilliam R."/>
            <person name="Hamilton C."/>
            <person name="Hart E.A."/>
            <person name="Hawes A."/>
            <person name="Heath P.D."/>
            <person name="Heitmann K."/>
            <person name="Hennig S."/>
            <person name="Hernandez J."/>
            <person name="Hinzmann B."/>
            <person name="Ho S."/>
            <person name="Hoffs M."/>
            <person name="Howden P.J."/>
            <person name="Huckle E.J."/>
            <person name="Hume J."/>
            <person name="Hunt P.J."/>
            <person name="Hunt A.R."/>
            <person name="Isherwood J."/>
            <person name="Jacob L."/>
            <person name="Johnson D."/>
            <person name="Jones S."/>
            <person name="de Jong P.J."/>
            <person name="Joseph S.S."/>
            <person name="Keenan S."/>
            <person name="Kelly S."/>
            <person name="Kershaw J.K."/>
            <person name="Khan Z."/>
            <person name="Kioschis P."/>
            <person name="Klages S."/>
            <person name="Knights A.J."/>
            <person name="Kosiura A."/>
            <person name="Kovar-Smith C."/>
            <person name="Laird G.K."/>
            <person name="Langford C."/>
            <person name="Lawlor S."/>
            <person name="Leversha M."/>
            <person name="Lewis L."/>
            <person name="Liu W."/>
            <person name="Lloyd C."/>
            <person name="Lloyd D.M."/>
            <person name="Loulseged H."/>
            <person name="Loveland J.E."/>
            <person name="Lovell J.D."/>
            <person name="Lozado R."/>
            <person name="Lu J."/>
            <person name="Lyne R."/>
            <person name="Ma J."/>
            <person name="Maheshwari M."/>
            <person name="Matthews L.H."/>
            <person name="McDowall J."/>
            <person name="McLaren S."/>
            <person name="McMurray A."/>
            <person name="Meidl P."/>
            <person name="Meitinger T."/>
            <person name="Milne S."/>
            <person name="Miner G."/>
            <person name="Mistry S.L."/>
            <person name="Morgan M."/>
            <person name="Morris S."/>
            <person name="Mueller I."/>
            <person name="Mullikin J.C."/>
            <person name="Nguyen N."/>
            <person name="Nordsiek G."/>
            <person name="Nyakatura G."/>
            <person name="O'dell C.N."/>
            <person name="Okwuonu G."/>
            <person name="Palmer S."/>
            <person name="Pandian R."/>
            <person name="Parker D."/>
            <person name="Parrish J."/>
            <person name="Pasternak S."/>
            <person name="Patel D."/>
            <person name="Pearce A.V."/>
            <person name="Pearson D.M."/>
            <person name="Pelan S.E."/>
            <person name="Perez L."/>
            <person name="Porter K.M."/>
            <person name="Ramsey Y."/>
            <person name="Reichwald K."/>
            <person name="Rhodes S."/>
            <person name="Ridler K.A."/>
            <person name="Schlessinger D."/>
            <person name="Schueler M.G."/>
            <person name="Sehra H.K."/>
            <person name="Shaw-Smith C."/>
            <person name="Shen H."/>
            <person name="Sheridan E.M."/>
            <person name="Shownkeen R."/>
            <person name="Skuce C.D."/>
            <person name="Smith M.L."/>
            <person name="Sotheran E.C."/>
            <person name="Steingruber H.E."/>
            <person name="Steward C.A."/>
            <person name="Storey R."/>
            <person name="Swann R.M."/>
            <person name="Swarbreck D."/>
            <person name="Tabor P.E."/>
            <person name="Taudien S."/>
            <person name="Taylor T."/>
            <person name="Teague B."/>
            <person name="Thomas K."/>
            <person name="Thorpe A."/>
            <person name="Timms K."/>
            <person name="Tracey A."/>
            <person name="Trevanion S."/>
            <person name="Tromans A.C."/>
            <person name="d'Urso M."/>
            <person name="Verduzco D."/>
            <person name="Villasana D."/>
            <person name="Waldron L."/>
            <person name="Wall M."/>
            <person name="Wang Q."/>
            <person name="Warren J."/>
            <person name="Warry G.L."/>
            <person name="Wei X."/>
            <person name="West A."/>
            <person name="Whitehead S.L."/>
            <person name="Whiteley M.N."/>
            <person name="Wilkinson J.E."/>
            <person name="Willey D.L."/>
            <person name="Williams G."/>
            <person name="Williams L."/>
            <person name="Williamson A."/>
            <person name="Williamson H."/>
            <person name="Wilming L."/>
            <person name="Woodmansey R.L."/>
            <person name="Wray P.W."/>
            <person name="Yen J."/>
            <person name="Zhang J."/>
            <person name="Zhou J."/>
            <person name="Zoghbi H."/>
            <person name="Zorilla S."/>
            <person name="Buck D."/>
            <person name="Reinhardt R."/>
            <person name="Poustka A."/>
            <person name="Rosenthal A."/>
            <person name="Lehrach H."/>
            <person name="Meindl A."/>
            <person name="Minx P.J."/>
            <person name="Hillier L.W."/>
            <person name="Willard H.F."/>
            <person name="Wilson R.K."/>
            <person name="Waterston R.H."/>
            <person name="Rice C.M."/>
            <person name="Vaudin M."/>
            <person name="Coulson A."/>
            <person name="Nelson D.L."/>
            <person name="Weinstock G."/>
            <person name="Sulston J.E."/>
            <person name="Durbin R.M."/>
            <person name="Hubbard T."/>
            <person name="Gibbs R.A."/>
            <person name="Beck S."/>
            <person name="Rogers J."/>
            <person name="Bentley D.R."/>
        </authorList>
    </citation>
    <scope>NUCLEOTIDE SEQUENCE [LARGE SCALE GENOMIC DNA]</scope>
</reference>
<reference key="3">
    <citation type="journal article" date="2004" name="Genome Res.">
        <title>The status, quality, and expansion of the NIH full-length cDNA project: the Mammalian Gene Collection (MGC).</title>
        <authorList>
            <consortium name="The MGC Project Team"/>
        </authorList>
    </citation>
    <scope>NUCLEOTIDE SEQUENCE [LARGE SCALE MRNA] (ISOFORM 3)</scope>
</reference>
<reference key="4">
    <citation type="journal article" date="2021" name="EMBO J.">
        <title>The TBC1D31/praja2 complex controls primary ciliogenesis through PKA-directed OFD1 ubiquitylation.</title>
        <authorList>
            <person name="Senatore E."/>
            <person name="Chiuso F."/>
            <person name="Rinaldi L."/>
            <person name="Intartaglia D."/>
            <person name="Delle Donne R."/>
            <person name="Pedone E."/>
            <person name="Catalanotti B."/>
            <person name="Pirone L."/>
            <person name="Fiorillo B."/>
            <person name="Moraca F."/>
            <person name="Giamundo G."/>
            <person name="Scala G."/>
            <person name="Raffeiner A."/>
            <person name="Torres-Quesada O."/>
            <person name="Stefan E."/>
            <person name="Kwiatkowski M."/>
            <person name="van Pijkeren A."/>
            <person name="Morleo M."/>
            <person name="Franco B."/>
            <person name="Garbi C."/>
            <person name="Conte I."/>
            <person name="Feliciello A."/>
        </authorList>
    </citation>
    <scope>PROTEIN SEQUENCE OF 734-744</scope>
    <scope>FUNCTION</scope>
    <scope>INTERACTION WITH TBC1D31</scope>
    <scope>PHOSPHORYLATION AT SER-735 BY PKA</scope>
    <scope>UBIQUITINATION BY PJA2</scope>
    <scope>MUTAGENESIS OF GLU-97 AND SER-735</scope>
</reference>
<reference key="5">
    <citation type="journal article" date="2003" name="J. Am. Soc. Nephrol.">
        <title>OFD1, the gene mutated in oral-facial-digital syndrome type 1, is expressed in the metanephros and in human embryonic renal mesenchymal cells.</title>
        <authorList>
            <person name="Romio L."/>
            <person name="Wright V."/>
            <person name="Price K."/>
            <person name="Winyard P.J."/>
            <person name="Donnai D."/>
            <person name="Porteous M.E."/>
            <person name="Franco B."/>
            <person name="Giorgio G."/>
            <person name="Malcolm S."/>
            <person name="Woolf A.S."/>
            <person name="Feather S.A."/>
        </authorList>
    </citation>
    <scope>SUBCELLULAR LOCATION</scope>
    <scope>TISSUE SPECIFICITY</scope>
    <scope>VARIANT OFD1 PHE-74</scope>
</reference>
<reference key="6">
    <citation type="journal article" date="2003" name="Nature">
        <title>Proteomic characterization of the human centrosome by protein correlation profiling.</title>
        <authorList>
            <person name="Andersen J.S."/>
            <person name="Wilkinson C.J."/>
            <person name="Mayor T."/>
            <person name="Mortensen P."/>
            <person name="Nigg E.A."/>
            <person name="Mann M."/>
        </authorList>
    </citation>
    <scope>IDENTIFICATION BY MASS SPECTROMETRY</scope>
    <scope>SUBCELLULAR LOCATION [LARGE SCALE ANALYSIS]</scope>
    <source>
        <tissue>Lymphoblast</tissue>
    </source>
</reference>
<reference key="7">
    <citation type="journal article" date="2006" name="Hum. Genet.">
        <title>A novel X-linked recessive mental retardation syndrome comprising macrocephaly and ciliary dysfunction is allelic to oral-facial-digital type I syndrome.</title>
        <authorList>
            <person name="Budny B."/>
            <person name="Chen W."/>
            <person name="Omran H."/>
            <person name="Fliegauf M."/>
            <person name="Tzschach A."/>
            <person name="Wisniewska M."/>
            <person name="Jensen L.R."/>
            <person name="Raynaud M."/>
            <person name="Shoichet S.A."/>
            <person name="Badura M."/>
            <person name="Lenzner S."/>
            <person name="Latos-Bielenska A."/>
            <person name="Ropers H.-H."/>
        </authorList>
    </citation>
    <scope>INVOLVEMENT IN SGBS2</scope>
</reference>
<reference key="8">
    <citation type="journal article" date="2007" name="Mol. Biol. Cell">
        <title>Functional characterization of the OFD1 protein reveals a nuclear localization and physical interaction with subunits of a chromatin remodeling complex.</title>
        <authorList>
            <person name="Giorgio G."/>
            <person name="Alfieri M."/>
            <person name="Prattichizzo C."/>
            <person name="Zullo A."/>
            <person name="Cairo S."/>
            <person name="Franco B."/>
        </authorList>
    </citation>
    <scope>SUBCELLULAR LOCATION</scope>
    <scope>HOMOOLIGOMERIZATION</scope>
    <scope>INTERACTION WITH RUVBL1</scope>
</reference>
<reference key="9">
    <citation type="journal article" date="2008" name="Proc. Natl. Acad. Sci. U.S.A.">
        <title>A quantitative atlas of mitotic phosphorylation.</title>
        <authorList>
            <person name="Dephoure N."/>
            <person name="Zhou C."/>
            <person name="Villen J."/>
            <person name="Beausoleil S.A."/>
            <person name="Bakalarski C.E."/>
            <person name="Elledge S.J."/>
            <person name="Gygi S.P."/>
        </authorList>
    </citation>
    <scope>PHOSPHORYLATION [LARGE SCALE ANALYSIS] AT SER-686</scope>
    <scope>IDENTIFICATION BY MASS SPECTROMETRY [LARGE SCALE ANALYSIS]</scope>
    <source>
        <tissue>Cervix carcinoma</tissue>
    </source>
</reference>
<reference key="10">
    <citation type="journal article" date="2009" name="Am. J. Hum. Genet.">
        <title>OFD1 is mutated in X-linked Joubert syndrome and interacts with LCA5-encoded lebercilin.</title>
        <authorList>
            <person name="Coene K.L."/>
            <person name="Roepman R."/>
            <person name="Doherty D."/>
            <person name="Afroze B."/>
            <person name="Kroes H.Y."/>
            <person name="Letteboer S.J."/>
            <person name="Ngu L.H."/>
            <person name="Budny B."/>
            <person name="van Wijk E."/>
            <person name="Gorden N.T."/>
            <person name="Azhimi M."/>
            <person name="Thauvin-Robinet C."/>
            <person name="Veltman J.A."/>
            <person name="Boink M."/>
            <person name="Kleefstra T."/>
            <person name="Cremers F.P."/>
            <person name="van Bokhoven H."/>
            <person name="de Brouwer A.P."/>
        </authorList>
    </citation>
    <scope>INVOLVEMENT IN JBTS10</scope>
    <scope>INTERACTION WITH LCA5</scope>
</reference>
<reference key="11">
    <citation type="journal article" date="2010" name="Dev. Cell">
        <title>Ofd1, a human disease gene, regulates the length and distal structure of centrioles.</title>
        <authorList>
            <person name="Singla V."/>
            <person name="Romaguera-Ros M."/>
            <person name="Garcia-Verdugo J.M."/>
            <person name="Reiter J.F."/>
        </authorList>
    </citation>
    <scope>SUBCELLULAR LOCATION</scope>
</reference>
<reference key="12">
    <citation type="journal article" date="2010" name="Nat. Genet.">
        <title>Candidate exome capture identifies mutation of SDCCAG8 as the cause of a retinal-renal ciliopathy.</title>
        <authorList>
            <person name="Otto E.A."/>
            <person name="Hurd T.W."/>
            <person name="Airik R."/>
            <person name="Chaki M."/>
            <person name="Zhou W."/>
            <person name="Stoetzel C."/>
            <person name="Patil S.B."/>
            <person name="Levy S."/>
            <person name="Ghosh A.K."/>
            <person name="Murga-Zamalloa C.A."/>
            <person name="van Reeuwijk J."/>
            <person name="Letteboer S.J."/>
            <person name="Sang L."/>
            <person name="Giles R.H."/>
            <person name="Liu Q."/>
            <person name="Coene K.L."/>
            <person name="Estrada-Cuzcano A."/>
            <person name="Collin R.W."/>
            <person name="McLaughlin H.M."/>
            <person name="Held S."/>
            <person name="Kasanuki J.M."/>
            <person name="Ramaswami G."/>
            <person name="Conte J."/>
            <person name="Lopez I."/>
            <person name="Washburn J."/>
            <person name="Macdonald J."/>
            <person name="Hu J."/>
            <person name="Yamashita Y."/>
            <person name="Maher E.R."/>
            <person name="Guay-Woodford L.M."/>
            <person name="Neumann H.P."/>
            <person name="Obermuller N."/>
            <person name="Koenekoop R.K."/>
            <person name="Bergmann C."/>
            <person name="Bei X."/>
            <person name="Lewis R.A."/>
            <person name="Katsanis N."/>
            <person name="Lopes V."/>
            <person name="Williams D.S."/>
            <person name="Lyons R.H."/>
            <person name="Dang C.V."/>
            <person name="Brito D.A."/>
            <person name="Dias M.B."/>
            <person name="Zhang X."/>
            <person name="Cavalcoli J.D."/>
            <person name="Nurnberg G."/>
            <person name="Nurnberg P."/>
            <person name="Pierce E.A."/>
            <person name="Jackson P.K."/>
            <person name="Antignac C."/>
            <person name="Saunier S."/>
            <person name="Roepman R."/>
            <person name="Dollfus H."/>
            <person name="Khanna H."/>
            <person name="Hildebrandt F."/>
        </authorList>
    </citation>
    <scope>INTERACTION WITH SDCCAG8</scope>
</reference>
<reference key="13">
    <citation type="journal article" date="2011" name="Sci. Signal.">
        <title>System-wide temporal characterization of the proteome and phosphoproteome of human embryonic stem cell differentiation.</title>
        <authorList>
            <person name="Rigbolt K.T."/>
            <person name="Prokhorova T.A."/>
            <person name="Akimov V."/>
            <person name="Henningsen J."/>
            <person name="Johansen P.T."/>
            <person name="Kratchmarova I."/>
            <person name="Kassem M."/>
            <person name="Mann M."/>
            <person name="Olsen J.V."/>
            <person name="Blagoev B."/>
        </authorList>
    </citation>
    <scope>PHOSPHORYLATION [LARGE SCALE ANALYSIS] AT SER-663 AND SER-669</scope>
    <scope>IDENTIFICATION BY MASS SPECTROMETRY [LARGE SCALE ANALYSIS]</scope>
</reference>
<reference key="14">
    <citation type="journal article" date="2012" name="Hum. Mol. Genet.">
        <title>Deep intronic mutation in OFD1, identified by targeted genomic next-generation sequencing, causes a severe form of X-linked retinitis pigmentosa (RP23).</title>
        <authorList>
            <person name="Webb T.R."/>
            <person name="Parfitt D.A."/>
            <person name="Gardner J.C."/>
            <person name="Martinez A."/>
            <person name="Bevilacqua D."/>
            <person name="Davidson A.E."/>
            <person name="Zito I."/>
            <person name="Thiselton D.L."/>
            <person name="Ressa J.H."/>
            <person name="Apergi M."/>
            <person name="Schwarz N."/>
            <person name="Kanuga N."/>
            <person name="Michaelides M."/>
            <person name="Cheetham M.E."/>
            <person name="Gorin M.B."/>
            <person name="Hardcastle A.J."/>
        </authorList>
    </citation>
    <scope>INVOLVEMENT IN RP23</scope>
</reference>
<reference key="15">
    <citation type="journal article" date="2013" name="EMBO J.">
        <title>A new cellular stress response that triggers centriolar satellite reorganization and ciliogenesis.</title>
        <authorList>
            <person name="Villumsen B.H."/>
            <person name="Danielsen J.R."/>
            <person name="Povlsen L."/>
            <person name="Sylvestersen K.B."/>
            <person name="Merdes A."/>
            <person name="Beli P."/>
            <person name="Yang Y.G."/>
            <person name="Choudhary C."/>
            <person name="Nielsen M.L."/>
            <person name="Mailand N."/>
            <person name="Bekker-Jensen S."/>
        </authorList>
    </citation>
    <scope>SUBCELLULAR LOCATION</scope>
</reference>
<reference key="16">
    <citation type="journal article" date="2013" name="J. Proteome Res.">
        <title>Toward a comprehensive characterization of a human cancer cell phosphoproteome.</title>
        <authorList>
            <person name="Zhou H."/>
            <person name="Di Palma S."/>
            <person name="Preisinger C."/>
            <person name="Peng M."/>
            <person name="Polat A.N."/>
            <person name="Heck A.J."/>
            <person name="Mohammed S."/>
        </authorList>
    </citation>
    <scope>PHOSPHORYLATION [LARGE SCALE ANALYSIS] AT SER-663; SER-669; SER-686; SER-720; SER-745; SER-774; SER-789 AND SER-811</scope>
    <scope>IDENTIFICATION BY MASS SPECTROMETRY [LARGE SCALE ANALYSIS]</scope>
    <source>
        <tissue>Cervix carcinoma</tissue>
        <tissue>Erythroleukemia</tissue>
    </source>
</reference>
<reference key="17">
    <citation type="journal article" date="2013" name="Nature">
        <title>Autophagy promotes primary ciliogenesis by removing OFD1 from centriolar satellites.</title>
        <authorList>
            <person name="Tang Z."/>
            <person name="Lin M.G."/>
            <person name="Stowe T.R."/>
            <person name="Chen S."/>
            <person name="Zhu M."/>
            <person name="Stearns T."/>
            <person name="Franco B."/>
            <person name="Zhong Q."/>
        </authorList>
    </citation>
    <scope>INTERACTION WITH MAP1LC3B</scope>
</reference>
<reference key="18">
    <citation type="journal article" date="2014" name="J. Proteomics">
        <title>An enzyme assisted RP-RPLC approach for in-depth analysis of human liver phosphoproteome.</title>
        <authorList>
            <person name="Bian Y."/>
            <person name="Song C."/>
            <person name="Cheng K."/>
            <person name="Dong M."/>
            <person name="Wang F."/>
            <person name="Huang J."/>
            <person name="Sun D."/>
            <person name="Wang L."/>
            <person name="Ye M."/>
            <person name="Zou H."/>
        </authorList>
    </citation>
    <scope>IDENTIFICATION BY MASS SPECTROMETRY [LARGE SCALE ANALYSIS]</scope>
    <source>
        <tissue>Liver</tissue>
    </source>
</reference>
<reference key="19">
    <citation type="journal article" date="2014" name="Nat. Genet.">
        <title>The oral-facial-digital syndrome gene C2CD3 encodes a positive regulator of centriole elongation.</title>
        <authorList>
            <person name="Thauvin-Robinet C."/>
            <person name="Lee J.S."/>
            <person name="Lopez E."/>
            <person name="Herranz-Perez V."/>
            <person name="Shida T."/>
            <person name="Franco B."/>
            <person name="Jego L."/>
            <person name="Ye F."/>
            <person name="Pasquier L."/>
            <person name="Loget P."/>
            <person name="Gigot N."/>
            <person name="Aral B."/>
            <person name="Lopes C.A."/>
            <person name="St-Onge J."/>
            <person name="Bruel A.L."/>
            <person name="Thevenon J."/>
            <person name="Gonzalez-Granero S."/>
            <person name="Alby C."/>
            <person name="Munnich A."/>
            <person name="Vekemans M."/>
            <person name="Huet F."/>
            <person name="Fry A.M."/>
            <person name="Saunier S."/>
            <person name="Riviere J.B."/>
            <person name="Attie-Bitach T."/>
            <person name="Garcia-Verdugo J.M."/>
            <person name="Faivre L."/>
            <person name="Megarbane A."/>
            <person name="Nachury M.V."/>
        </authorList>
    </citation>
    <scope>INTERACTION WITH C2CD3</scope>
</reference>
<reference key="20">
    <citation type="journal article" date="2016" name="Hum. Mol. Genet.">
        <title>OFIP/KIAA0753 forms a complex with OFD1 and FOR20 at pericentriolar satellites and centrosomes and is mutated in one individual with oral-facial-digital syndrome.</title>
        <authorList>
            <person name="Chevrier V."/>
            <person name="Bruel A.L."/>
            <person name="Van Dam T.J."/>
            <person name="Franco B."/>
            <person name="Lo Scalzo M."/>
            <person name="Lembo F."/>
            <person name="Audebert S."/>
            <person name="Baudelet E."/>
            <person name="Isnardon D."/>
            <person name="Bole A."/>
            <person name="Borg J.P."/>
            <person name="Kuentz P."/>
            <person name="Thevenon J."/>
            <person name="Burglen L."/>
            <person name="Faivre L."/>
            <person name="Riviere J.B."/>
            <person name="Huynen M.A."/>
            <person name="Birnbaum D."/>
            <person name="Rosnet O."/>
            <person name="Thauvin-Robinet C."/>
        </authorList>
    </citation>
    <scope>INTERACTION WITH CEP20; KIAA0753 AND PCM1</scope>
    <scope>SUBCELLULAR LOCATION</scope>
</reference>
<reference key="21">
    <citation type="journal article" date="2024" name="Genet. Med.">
        <title>Differential alternative splicing analysis links variation in ZRSR2 to a novel type of oral-facial-digital syndrome.</title>
        <authorList>
            <person name="Hannes L."/>
            <person name="Atzori M."/>
            <person name="Goldenberg A."/>
            <person name="Argente J."/>
            <person name="Attie-Bitach T."/>
            <person name="Amiel J."/>
            <person name="Attanasio C."/>
            <person name="Braslavsky D.G."/>
            <person name="Bruel A.L."/>
            <person name="Castanet M."/>
            <person name="Dubourg C."/>
            <person name="Jacobs A."/>
            <person name="Lyonnet S."/>
            <person name="Martinez-Mayer J."/>
            <person name="Perez Millan M.I."/>
            <person name="Pezzella N."/>
            <person name="Pelgrims E."/>
            <person name="Aerden M."/>
            <person name="Bauters M."/>
            <person name="Rochtus A."/>
            <person name="Scaglia P."/>
            <person name="Swillen A."/>
            <person name="Sifrim A."/>
            <person name="Tammaro R."/>
            <person name="Mau-Them F.T."/>
            <person name="Odent S."/>
            <person name="Thauvin-Robinet C."/>
            <person name="Franco B."/>
            <person name="Breckpot J."/>
        </authorList>
    </citation>
    <scope>VARIANT THR-742</scope>
</reference>
<reference key="22">
    <citation type="journal article" date="2001" name="Am. J. Hum. Genet.">
        <title>Identification of the gene for oral-facial-digital type I syndrome.</title>
        <authorList>
            <person name="Ferrante M.I."/>
            <person name="Giorgio G."/>
            <person name="Feather S.A."/>
            <person name="Bulfone A."/>
            <person name="Wright V."/>
            <person name="Ghiani M."/>
            <person name="Selicorni A."/>
            <person name="Gammaro L."/>
            <person name="Scolari F."/>
            <person name="Woolf A.S."/>
            <person name="Sylvie O."/>
            <person name="Le Marec B."/>
            <person name="Malcolm S."/>
            <person name="Winter R."/>
            <person name="Ballabio A."/>
            <person name="Franco B."/>
        </authorList>
    </citation>
    <scope>VARIANTS OFD1 358-LYS--ASP-360 DELINS PHE-SER-TYR AND ARG-435</scope>
</reference>
<reference key="23">
    <citation type="journal article" date="2002" name="J. Med. Genet.">
        <title>Four novel mutations in the OFD1 (Cxorf5) gene in Finnish patients with oral-facial-digital syndrome 1.</title>
        <authorList>
            <person name="Rakkolainen A."/>
            <person name="Ala-Mello S."/>
            <person name="Kristo P."/>
            <person name="Orpana A."/>
            <person name="Jaervelae I."/>
        </authorList>
    </citation>
    <scope>VARIANT OFD1 THR-79</scope>
</reference>
<reference key="24">
    <citation type="journal article" date="2006" name="J. Med. Genet.">
        <title>Clinical, molecular, and genotype-phenotype correlation studies from 25 cases of oral-facial-digital syndrome type 1: a French and Belgian collaborative study.</title>
        <authorList>
            <person name="Thauvin-Robinet C."/>
            <person name="Cossee M."/>
            <person name="Cormier-Daire V."/>
            <person name="Van Maldergem L."/>
            <person name="Toutain A."/>
            <person name="Alembik Y."/>
            <person name="Bieth E."/>
            <person name="Layet V."/>
            <person name="Parent P."/>
            <person name="David A."/>
            <person name="Goldenberg A."/>
            <person name="Mortier G."/>
            <person name="Heron D."/>
            <person name="Sagot P."/>
            <person name="Bouvier A.M."/>
            <person name="Huet F."/>
            <person name="Cusin V."/>
            <person name="Donzel A."/>
            <person name="Devys D."/>
            <person name="Teyssier J.R."/>
            <person name="Faivre L."/>
        </authorList>
    </citation>
    <scope>VARIANT OFD1 SER-138</scope>
</reference>
<reference key="25">
    <citation type="journal article" date="2013" name="Hum. Mutat.">
        <title>Novel mutations including deletions of the entire OFD1 gene in 30 families with type 1 orofaciodigital syndrome: A study of the extensive clinical variability.</title>
        <authorList>
            <person name="Bisschoff I.J."/>
            <person name="Zeschnigk C."/>
            <person name="Horn D."/>
            <person name="Wellek B."/>
            <person name="Riess A."/>
            <person name="Wessels M."/>
            <person name="Willems P."/>
            <person name="Jensen P."/>
            <person name="Busche A."/>
            <person name="Bekkebraten J."/>
            <person name="Chopra M."/>
            <person name="Hove H.D."/>
            <person name="Evers C."/>
            <person name="Heimdal K."/>
            <person name="Kaiser A.S."/>
            <person name="Kunstmann E."/>
            <person name="Robinson K.L."/>
            <person name="Linne M."/>
            <person name="Martin P."/>
            <person name="McGrath J."/>
            <person name="Pradel W."/>
            <person name="Prescott K.E."/>
            <person name="Roesler B."/>
            <person name="Rudolf G."/>
            <person name="Siebers-Renelt U."/>
            <person name="Tyshchenko N."/>
            <person name="Wieczorek D."/>
            <person name="Wolff G."/>
            <person name="Dobyns W.B."/>
            <person name="Morris-Rosendahl D.J."/>
        </authorList>
    </citation>
    <scope>VARIANT OFD1 ARG-141</scope>
</reference>
<reference key="26">
    <citation type="journal article" date="2015" name="Am. J. Hum. Genet.">
        <title>Joubert Syndrome in French Canadians and Identification of Mutations in CEP104.</title>
        <authorList>
            <consortium name="Care4Rare Canada Consortium"/>
            <person name="Srour M."/>
            <person name="Hamdan F.F."/>
            <person name="McKnight D."/>
            <person name="Davis E."/>
            <person name="Mandel H."/>
            <person name="Schwartzentruber J."/>
            <person name="Martin B."/>
            <person name="Patry L."/>
            <person name="Nassif C."/>
            <person name="Dionne-Laporte A."/>
            <person name="Ospina L.H."/>
            <person name="Lemyre E."/>
            <person name="Massicotte C."/>
            <person name="Laframboise R."/>
            <person name="Maranda B."/>
            <person name="Labuda D."/>
            <person name="Decarie J.C."/>
            <person name="Rypens F."/>
            <person name="Goldsher D."/>
            <person name="Fallet-Bianco C."/>
            <person name="Soucy J.F."/>
            <person name="Laberge A.M."/>
            <person name="Maftei C."/>
            <person name="Boycott K."/>
            <person name="Brais B."/>
            <person name="Boucher R.M."/>
            <person name="Rouleau G.A."/>
            <person name="Katsanis N."/>
            <person name="Majewski J."/>
            <person name="Elpeleg O."/>
            <person name="Kukolich M.K."/>
            <person name="Shalev S."/>
            <person name="Michaud J.L."/>
        </authorList>
    </citation>
    <scope>VARIANT JBTS10 ASP-307</scope>
</reference>
<organism>
    <name type="scientific">Homo sapiens</name>
    <name type="common">Human</name>
    <dbReference type="NCBI Taxonomy" id="9606"/>
    <lineage>
        <taxon>Eukaryota</taxon>
        <taxon>Metazoa</taxon>
        <taxon>Chordata</taxon>
        <taxon>Craniata</taxon>
        <taxon>Vertebrata</taxon>
        <taxon>Euteleostomi</taxon>
        <taxon>Mammalia</taxon>
        <taxon>Eutheria</taxon>
        <taxon>Euarchontoglires</taxon>
        <taxon>Primates</taxon>
        <taxon>Haplorrhini</taxon>
        <taxon>Catarrhini</taxon>
        <taxon>Hominidae</taxon>
        <taxon>Homo</taxon>
    </lineage>
</organism>
<proteinExistence type="evidence at protein level"/>
<sequence>MMAQSNMFTVADVLSQDELRKKLYQTFKDRGILDTLKTQLRNQLIHELMHPVLSGELQPRSISVEGSSLLIGASNSLVADHLQRCGYEYSLSVFFPESGLAKEKVFTMQDLLQLIKINPTSSLYKSLVSGSDKENQKGFLMHFLKELAEYHQAKESCNMETQTSSTFNRDSLAEKLQLIDDQFADAYPQRIKFESLEIKLNEYKREIEEQLRAEMCQKLKFFKDTEIAKIKMEAKKKYEKELTMFQNDFEKACQAKSEALVLREKSTLERIHKHQEIETKEIYAQRQLLLKDMDLLRGREAELKQRVEAFELNQKLQEEKHKSITEALRRQEQNIKSFEETYDRKLKNELLKYQLELKDDYIIRTNRLIEDERKNKEKAVHLQEELIAINSKKEELNQSVNRVKELELELESVKAQSLAITKQNHMLNEKVKEMSDYSLLKEEKLELLAQNKLLKQQLEESRNENLRLLNRLAQPAPELAVFQKELRKAEKAIVVEHEEFESCRQALHKQLQDEIEHSAQLKAQILGYKASVKSLTTQVADLKLQLKQTQTALENEVYCNPKQSVIDRSVNGLINGNVVPCNGEISGDFLNNPFKQENVLARMVASRITNYPTAWVEGSSPDSDLEFVANTKARVKELQQEAERLEKAFRSYHRRVIKNSAKSPLAAKSPPSLHLLEAFKNITSSSPERHIFGEDRVVSEQPQVGTLEERNDVVEALTGSAASRLRGGTSSRRLSSTPLPKAKRSLESEMYLEGLGRSHIASPSPCPDRMPLPSPTESRHSLSIPPVSSPPEQKVGLYRRQTELQDKSEFSDVDKLAFKDNEEFESSFESAGNMPRQLEMGGLSPAGDMSHVDAAAAAVPLSYQHPSVDQKQIEEQKEEEKIREQQVKERRQREERRQSNLQEVLERERRELEKLYQERKMIEESLKIKIKKELEMENELEMSNQEIKDKSAHSENPLEKYMKIIQQEQDQESADKSSKKMVQEGSLVDTLQSSDKVESLTGFSHEELDDSW</sequence>
<protein>
    <recommendedName>
        <fullName evidence="26">Centriole and centriolar satellite protein OFD1</fullName>
    </recommendedName>
    <alternativeName>
        <fullName>Oral-facial-digital syndrome 1 protein</fullName>
    </alternativeName>
    <alternativeName>
        <fullName>Protein 71-7A</fullName>
    </alternativeName>
</protein>
<keyword id="KW-0025">Alternative splicing</keyword>
<keyword id="KW-0966">Cell projection</keyword>
<keyword id="KW-1186">Ciliopathy</keyword>
<keyword id="KW-0969">Cilium</keyword>
<keyword id="KW-0970">Cilium biogenesis/degradation</keyword>
<keyword id="KW-0175">Coiled coil</keyword>
<keyword id="KW-0963">Cytoplasm</keyword>
<keyword id="KW-0206">Cytoskeleton</keyword>
<keyword id="KW-0903">Direct protein sequencing</keyword>
<keyword id="KW-0225">Disease variant</keyword>
<keyword id="KW-0979">Joubert syndrome</keyword>
<keyword id="KW-0539">Nucleus</keyword>
<keyword id="KW-0597">Phosphoprotein</keyword>
<keyword id="KW-1267">Proteomics identification</keyword>
<keyword id="KW-1185">Reference proteome</keyword>
<keyword id="KW-0682">Retinitis pigmentosa</keyword>
<keyword id="KW-0832">Ubl conjugation</keyword>
<comment type="function">
    <text evidence="1 22">Component of the centrioles controlling mother and daughter centrioles length. Recruits to the centriole IFT88 and centriole distal appendage-specific proteins including CEP164 (By similarity). Involved in the biogenesis of the cilium, a centriole-associated function. The cilium is a cell surface projection found in many vertebrate cells required to transduce signals important for development and tissue homeostasis (PubMed:33934390). Plays an important role in development by regulating Wnt signaling and the specification of the left-right axis. Only OFD1 localized at the centriolar satellites is removed by autophagy, which is an important step in the ciliogenesis regulation (By similarity).</text>
</comment>
<comment type="subunit">
    <text evidence="11 12 14 17 19 21 22">Homooligomer. Interacts with LCA5. Interacts with RUVBL1; the interaction is direct and may mediate interaction with the NuA4 histone acetyltransferase complex. Interacts with SDCCAG8; the interaction is direct. Interacts with MAP1LC3B. Interacts with C2CD3; OFD1 may act as a negative regulator of C2CD3. Forms a complex with KIAA0753/OFIP and CEP20/FOR20; the interaction with CEP20 is detected only in the presence of KIAA0753. Interacts with PCM1; this interaction may be mediated by KIAA0753/OFIP (PubMed:26643951). Interacts with TBC1D31; regulates OFD1 activity in cilium assembly (PubMed:33934390).</text>
</comment>
<comment type="interaction">
    <interactant intactId="EBI-716327">
        <id>O75665</id>
    </interactant>
    <interactant intactId="EBI-2798775">
        <id>O75143</id>
        <label>ATG13</label>
    </interactant>
    <organismsDiffer>false</organismsDiffer>
    <experiments>4</experiments>
</comment>
<comment type="interaction">
    <interactant intactId="EBI-716327">
        <id>O75665</id>
    </interactant>
    <interactant intactId="EBI-10897521">
        <id>Q4AC94</id>
        <label>C2CD3</label>
    </interactant>
    <organismsDiffer>false</organismsDiffer>
    <experiments>3</experiments>
</comment>
<comment type="interaction">
    <interactant intactId="EBI-716327">
        <id>O75665</id>
    </interactant>
    <interactant intactId="EBI-373144">
        <id>Q9GZQ8</id>
        <label>MAP1LC3B</label>
    </interactant>
    <organismsDiffer>false</organismsDiffer>
    <experiments>7</experiments>
</comment>
<comment type="interaction">
    <interactant intactId="EBI-716327">
        <id>O75665</id>
    </interactant>
    <interactant intactId="EBI-744782">
        <id>Q9Y5B8</id>
        <label>NME7</label>
    </interactant>
    <organismsDiffer>false</organismsDiffer>
    <experiments>3</experiments>
</comment>
<comment type="interaction">
    <interactant intactId="EBI-716327">
        <id>O75665</id>
    </interactant>
    <interactant intactId="EBI-716327">
        <id>O75665</id>
        <label>OFD1</label>
    </interactant>
    <organismsDiffer>false</organismsDiffer>
    <experiments>3</experiments>
</comment>
<comment type="interaction">
    <interactant intactId="EBI-716327">
        <id>O75665</id>
    </interactant>
    <interactant intactId="EBI-741421">
        <id>Q15154</id>
        <label>PCM1</label>
    </interactant>
    <organismsDiffer>false</organismsDiffer>
    <experiments>8</experiments>
</comment>
<comment type="interaction">
    <interactant intactId="EBI-716327">
        <id>O75665</id>
    </interactant>
    <interactant intactId="EBI-476768">
        <id>P53350</id>
        <label>PLK1</label>
    </interactant>
    <organismsDiffer>false</organismsDiffer>
    <experiments>4</experiments>
</comment>
<comment type="interaction">
    <interactant intactId="EBI-716327">
        <id>O75665</id>
    </interactant>
    <interactant intactId="EBI-353675">
        <id>Q9Y265</id>
        <label>RUVBL1</label>
    </interactant>
    <organismsDiffer>false</organismsDiffer>
    <experiments>3</experiments>
</comment>
<comment type="subcellular location">
    <subcellularLocation>
        <location evidence="7 8 13 21">Cytoplasm</location>
        <location evidence="7 8 13 21">Cytoskeleton</location>
        <location evidence="7 8 13 21">Microtubule organizing center</location>
        <location evidence="7 8 13 21">Centrosome</location>
        <location evidence="7 8 13 21">Centriole</location>
    </subcellularLocation>
    <subcellularLocation>
        <location evidence="11">Cytoplasm</location>
        <location evidence="11">Cytoskeleton</location>
        <location evidence="11">Cilium basal body</location>
    </subcellularLocation>
    <subcellularLocation>
        <location evidence="11">Nucleus</location>
    </subcellularLocation>
    <subcellularLocation>
        <location evidence="18 21">Cytoplasm</location>
        <location evidence="18 21">Cytoskeleton</location>
        <location evidence="18 21">Microtubule organizing center</location>
        <location evidence="18 21">Centrosome</location>
        <location evidence="18 21">Centriolar satellite</location>
    </subcellularLocation>
    <text evidence="21">Localizes to centriole distal ends and to centriolar satellites (PubMed:20230748, PubMed:24121310). Localization to centrioles and pericentriolar satellites may be mediated by KIAA0753/OFIP (PubMed:26643951).</text>
</comment>
<comment type="alternative products">
    <event type="alternative splicing"/>
    <isoform>
        <id>O75665-1</id>
        <name>1</name>
        <name>ODF1a</name>
        <sequence type="displayed"/>
    </isoform>
    <isoform>
        <id>O75665-2</id>
        <name>2</name>
        <name>ODF1b</name>
        <sequence type="described" ref="VSP_004177 VSP_004178"/>
    </isoform>
    <isoform>
        <id>O75665-3</id>
        <name>3</name>
        <sequence type="described" ref="VSP_023334"/>
    </isoform>
</comment>
<comment type="tissue specificity">
    <text evidence="7">Widely expressed. Expressed in 9 and 14 weeks old embryos in metanephric mesenchyme, oral mucosa, lung, heart, nasal and cranial cartilage, and brain. Expressed in metanephros, brain, tongue, and limb.</text>
</comment>
<comment type="PTM">
    <text evidence="22">Phosphorylated. Phosphorylation at Ser-735, by the cAMP-dependent protein kinase PKA, triggers ubiquitination and proteasomal degradation of OFD1. Also increases its interaction with TBC1D31 and regulates its function in ciliogenesis.</text>
</comment>
<comment type="PTM">
    <text evidence="22">Ubiquitinated by PJA2, upon phosphorylation at Ser-735 by PKA, leads to the proteasomal degradation of OFD1.</text>
</comment>
<comment type="disease" evidence="5 6 7 9 16">
    <disease id="DI-02099">
        <name>Orofaciodigital syndrome 1</name>
        <acronym>OFD1</acronym>
        <description>A form of orofaciodigital syndrome, a group of heterogeneous disorders characterized by abnormalities in the oral cavity, face, and digits and associated phenotypic abnormalities that lead to the delineation of various subtypes. OFD1 is X-linked dominant syndrome, lethal in males. Craniofacial findings consist of facial asymmetry, hypertelorism, median cleft, or pseudocleft of the upper lip, hypoplasia of the alae nasi, oral clefts and abnormal frenulea, tongue anomalies (clefting, cysts, hamartoma), and anomalous dentition involving missing or extra teeth. Asymmetric brachydactyly and/or syndactyly of the fingers and toes occur frequently. Approximately 50% of OFD1 females have some degree of intellectual disability. Some patients have structural central nervous system anomalies such as agenesis of the corpus callosum, cerebellar agenesis, or a Dandy-Walker malformation. Patients with OFD1 can develop fibrocystic disease of the liver and pancreas, in addition to polycystic kidneys.</description>
        <dbReference type="MIM" id="311200"/>
    </disease>
    <text>The disease is caused by variants affecting the gene represented in this entry.</text>
</comment>
<comment type="disease" evidence="10">
    <disease id="DI-02750">
        <name>Simpson-Golabi-Behmel syndrome 2</name>
        <acronym>SGBS2</acronym>
        <description>A severe variant of Simpson-Golabi-Behmel syndrome, a condition characterized by pre- and postnatal overgrowth (gigantism), facial dysmorphism and a variety of inconstant visceral and skeletal malformations.</description>
        <dbReference type="MIM" id="300209"/>
    </disease>
    <text>The disease may be caused by variants affecting the gene represented in this entry.</text>
</comment>
<comment type="disease" evidence="12 20">
    <disease id="DI-02504">
        <name>Joubert syndrome 10</name>
        <acronym>JBTS10</acronym>
        <description>A disorder presenting with cerebellar ataxia, oculomotor apraxia, hypotonia, neonatal breathing abnormalities and psychomotor delay. Neuroradiologically, it is characterized by cerebellar vermian hypoplasia/aplasia, thickened and reoriented superior cerebellar peduncles, and an abnormally large interpeduncular fossa, giving the appearance of a molar tooth on transaxial slices (molar tooth sign). Additional variable features include retinal dystrophy and renal disease.</description>
        <dbReference type="MIM" id="300804"/>
    </disease>
    <text>The disease is caused by variants affecting the gene represented in this entry.</text>
</comment>
<comment type="disease" evidence="15">
    <disease id="DI-04060">
        <name>Retinitis pigmentosa 23</name>
        <acronym>RP23</acronym>
        <description>A retinal dystrophy belonging to the group of pigmentary retinopathies. Retinitis pigmentosa is characterized by retinal pigment deposits visible on fundus examination and primary loss of rod photoreceptor cells followed by secondary loss of cone photoreceptors. Patients typically have night vision blindness and loss of midperipheral visual field. As their condition progresses, they lose their far peripheral visual field and eventually central vision as well.</description>
        <dbReference type="MIM" id="300424"/>
    </disease>
    <text>The disease may be caused by variants affecting the gene represented in this entry.</text>
</comment>
<comment type="similarity">
    <text evidence="26">Belongs to the OFD1 family.</text>
</comment>
<comment type="online information" name="Oral-facial-digital syndrome 1 (OFD1)">
    <link uri="https://databases.lovd.nl/shared/genes/OFD1"/>
    <text>Leiden Open Variation Database (LOVD)</text>
</comment>
<evidence type="ECO:0000250" key="1">
    <source>
        <dbReference type="UniProtKB" id="Q80Z25"/>
    </source>
</evidence>
<evidence type="ECO:0000255" key="2"/>
<evidence type="ECO:0000255" key="3">
    <source>
        <dbReference type="PROSITE-ProRule" id="PRU00126"/>
    </source>
</evidence>
<evidence type="ECO:0000256" key="4">
    <source>
        <dbReference type="SAM" id="MobiDB-lite"/>
    </source>
</evidence>
<evidence type="ECO:0000269" key="5">
    <source>
    </source>
</evidence>
<evidence type="ECO:0000269" key="6">
    <source>
    </source>
</evidence>
<evidence type="ECO:0000269" key="7">
    <source>
    </source>
</evidence>
<evidence type="ECO:0000269" key="8">
    <source>
    </source>
</evidence>
<evidence type="ECO:0000269" key="9">
    <source>
    </source>
</evidence>
<evidence type="ECO:0000269" key="10">
    <source>
    </source>
</evidence>
<evidence type="ECO:0000269" key="11">
    <source>
    </source>
</evidence>
<evidence type="ECO:0000269" key="12">
    <source>
    </source>
</evidence>
<evidence type="ECO:0000269" key="13">
    <source>
    </source>
</evidence>
<evidence type="ECO:0000269" key="14">
    <source>
    </source>
</evidence>
<evidence type="ECO:0000269" key="15">
    <source>
    </source>
</evidence>
<evidence type="ECO:0000269" key="16">
    <source>
    </source>
</evidence>
<evidence type="ECO:0000269" key="17">
    <source>
    </source>
</evidence>
<evidence type="ECO:0000269" key="18">
    <source>
    </source>
</evidence>
<evidence type="ECO:0000269" key="19">
    <source>
    </source>
</evidence>
<evidence type="ECO:0000269" key="20">
    <source>
    </source>
</evidence>
<evidence type="ECO:0000269" key="21">
    <source>
    </source>
</evidence>
<evidence type="ECO:0000269" key="22">
    <source>
    </source>
</evidence>
<evidence type="ECO:0000269" key="23">
    <source>
    </source>
</evidence>
<evidence type="ECO:0000303" key="24">
    <source>
    </source>
</evidence>
<evidence type="ECO:0000303" key="25">
    <source>
    </source>
</evidence>
<evidence type="ECO:0000305" key="26"/>
<evidence type="ECO:0007744" key="27">
    <source>
    </source>
</evidence>
<evidence type="ECO:0007744" key="28">
    <source>
    </source>
</evidence>
<evidence type="ECO:0007744" key="29">
    <source>
    </source>
</evidence>
<gene>
    <name type="primary">OFD1</name>
    <name type="synonym">CXorf5</name>
</gene>
<name>OFD1_HUMAN</name>
<feature type="chain" id="PRO_0000058029" description="Centriole and centriolar satellite protein OFD1">
    <location>
        <begin position="1"/>
        <end position="1012"/>
    </location>
</feature>
<feature type="domain" description="LisH" evidence="3">
    <location>
        <begin position="70"/>
        <end position="102"/>
    </location>
</feature>
<feature type="region of interest" description="Mediates homooligomerization">
    <location>
        <begin position="609"/>
        <end position="665"/>
    </location>
</feature>
<feature type="region of interest" description="Mediates the interaction with SDCCAG8" evidence="14">
    <location>
        <begin position="615"/>
        <end position="1012"/>
    </location>
</feature>
<feature type="region of interest" description="Disordered" evidence="4">
    <location>
        <begin position="719"/>
        <end position="744"/>
    </location>
</feature>
<feature type="region of interest" description="Disordered" evidence="4">
    <location>
        <begin position="757"/>
        <end position="794"/>
    </location>
</feature>
<feature type="region of interest" description="Disordered" evidence="4">
    <location>
        <begin position="824"/>
        <end position="904"/>
    </location>
</feature>
<feature type="region of interest" description="Disordered" evidence="4">
    <location>
        <begin position="963"/>
        <end position="1012"/>
    </location>
</feature>
<feature type="coiled-coil region" evidence="2">
    <location>
        <begin position="189"/>
        <end position="557"/>
    </location>
</feature>
<feature type="coiled-coil region" evidence="2">
    <location>
        <begin position="622"/>
        <end position="662"/>
    </location>
</feature>
<feature type="coiled-coil region" evidence="2">
    <location>
        <begin position="867"/>
        <end position="956"/>
    </location>
</feature>
<feature type="compositionally biased region" description="Low complexity" evidence="4">
    <location>
        <begin position="720"/>
        <end position="737"/>
    </location>
</feature>
<feature type="compositionally biased region" description="Pro residues" evidence="4">
    <location>
        <begin position="764"/>
        <end position="774"/>
    </location>
</feature>
<feature type="compositionally biased region" description="Basic and acidic residues" evidence="4">
    <location>
        <begin position="871"/>
        <end position="904"/>
    </location>
</feature>
<feature type="compositionally biased region" description="Basic and acidic residues" evidence="4">
    <location>
        <begin position="973"/>
        <end position="982"/>
    </location>
</feature>
<feature type="modified residue" description="Phosphoserine" evidence="28 29">
    <location>
        <position position="663"/>
    </location>
</feature>
<feature type="modified residue" description="Phosphoserine" evidence="28 29">
    <location>
        <position position="669"/>
    </location>
</feature>
<feature type="modified residue" description="Phosphoserine" evidence="27 29">
    <location>
        <position position="686"/>
    </location>
</feature>
<feature type="modified residue" description="Phosphoserine" evidence="29">
    <location>
        <position position="720"/>
    </location>
</feature>
<feature type="modified residue" description="Phosphoserine; by PKA" evidence="22">
    <location>
        <position position="735"/>
    </location>
</feature>
<feature type="modified residue" description="Phosphoserine" evidence="29">
    <location>
        <position position="745"/>
    </location>
</feature>
<feature type="modified residue" description="Phosphoserine" evidence="29">
    <location>
        <position position="774"/>
    </location>
</feature>
<feature type="modified residue" description="Phosphoserine" evidence="29">
    <location>
        <position position="789"/>
    </location>
</feature>
<feature type="modified residue" description="Phosphoserine" evidence="29">
    <location>
        <position position="811"/>
    </location>
</feature>
<feature type="splice variant" id="VSP_023334" description="In isoform 3." evidence="24">
    <location>
        <begin position="313"/>
        <end position="352"/>
    </location>
</feature>
<feature type="splice variant" id="VSP_004177" description="In isoform 2." evidence="25">
    <original>KYQLELKDDYIIRTNR</original>
    <variation>NFHRLHGVCLALGILI</variation>
    <location>
        <begin position="352"/>
        <end position="367"/>
    </location>
</feature>
<feature type="splice variant" id="VSP_004178" description="In isoform 2." evidence="25">
    <location>
        <begin position="368"/>
        <end position="1012"/>
    </location>
</feature>
<feature type="sequence variant" id="VAR_015574" description="In OFD1; dbSNP:rs312262812." evidence="7">
    <original>S</original>
    <variation>F</variation>
    <location>
        <position position="74"/>
    </location>
</feature>
<feature type="sequence variant" id="VAR_030789" description="In OFD1; dbSNP:rs312262814." evidence="6">
    <original>A</original>
    <variation>T</variation>
    <location>
        <position position="79"/>
    </location>
</feature>
<feature type="sequence variant" id="VAR_058758" description="In OFD1; dbSNP:rs312262827." evidence="9">
    <original>G</original>
    <variation>S</variation>
    <location>
        <position position="138"/>
    </location>
</feature>
<feature type="sequence variant" id="VAR_069100" description="In OFD1; dbSNP:rs886039860." evidence="16">
    <original>M</original>
    <variation>R</variation>
    <location>
        <position position="141"/>
    </location>
</feature>
<feature type="sequence variant" id="VAR_075701" description="In JBTS10; uncertain significance." evidence="20">
    <original>V</original>
    <variation>D</variation>
    <location>
        <position position="307"/>
    </location>
</feature>
<feature type="sequence variant" id="VAR_013753" description="In OFD1." evidence="5">
    <original>KDD</original>
    <variation>FSY</variation>
    <location>
        <begin position="358"/>
        <end position="360"/>
    </location>
</feature>
<feature type="sequence variant" id="VAR_013754" description="In OFD1; dbSNP:rs122460150." evidence="5">
    <original>S</original>
    <variation>R</variation>
    <location>
        <position position="435"/>
    </location>
</feature>
<feature type="sequence variant" id="VAR_090061" description="In dbSNP:rs1569151549." evidence="23">
    <original>A</original>
    <variation>T</variation>
    <location>
        <position position="742"/>
    </location>
</feature>
<feature type="mutagenesis site" description="Increased protein stability." evidence="22">
    <original>E</original>
    <variation>G</variation>
    <location>
        <position position="97"/>
    </location>
</feature>
<feature type="mutagenesis site" description="Loss of phosphorylation by PKA. Loss of cAMP-dependent interaction with TBC1D31. Loss of ubiquitin-mediated proteasomal degradation. Loss of function in cilium assembly. Dominant negative effect." evidence="22">
    <original>S</original>
    <variation>A</variation>
    <location>
        <position position="735"/>
    </location>
</feature>